<protein>
    <recommendedName>
        <fullName evidence="1">6,7-dimethyl-8-ribityllumazine synthase</fullName>
        <shortName evidence="1">DMRL synthase</shortName>
        <shortName evidence="1">LS</shortName>
        <shortName evidence="1">Lumazine synthase</shortName>
        <ecNumber evidence="1">2.5.1.78</ecNumber>
    </recommendedName>
</protein>
<dbReference type="EC" id="2.5.1.78" evidence="1"/>
<dbReference type="EMBL" id="AM260525">
    <property type="protein sequence ID" value="CAK01678.1"/>
    <property type="molecule type" value="Genomic_DNA"/>
</dbReference>
<dbReference type="RefSeq" id="WP_012231860.1">
    <property type="nucleotide sequence ID" value="NC_010161.1"/>
</dbReference>
<dbReference type="SMR" id="A9IVC0"/>
<dbReference type="KEGG" id="btr:BT_1314"/>
<dbReference type="eggNOG" id="COG0054">
    <property type="taxonomic scope" value="Bacteria"/>
</dbReference>
<dbReference type="HOGENOM" id="CLU_089358_1_2_5"/>
<dbReference type="UniPathway" id="UPA00275">
    <property type="reaction ID" value="UER00404"/>
</dbReference>
<dbReference type="Proteomes" id="UP000001592">
    <property type="component" value="Chromosome"/>
</dbReference>
<dbReference type="GO" id="GO:0005829">
    <property type="term" value="C:cytosol"/>
    <property type="evidence" value="ECO:0007669"/>
    <property type="project" value="TreeGrafter"/>
</dbReference>
<dbReference type="GO" id="GO:0009349">
    <property type="term" value="C:riboflavin synthase complex"/>
    <property type="evidence" value="ECO:0007669"/>
    <property type="project" value="InterPro"/>
</dbReference>
<dbReference type="GO" id="GO:0000906">
    <property type="term" value="F:6,7-dimethyl-8-ribityllumazine synthase activity"/>
    <property type="evidence" value="ECO:0007669"/>
    <property type="project" value="UniProtKB-UniRule"/>
</dbReference>
<dbReference type="GO" id="GO:0009231">
    <property type="term" value="P:riboflavin biosynthetic process"/>
    <property type="evidence" value="ECO:0007669"/>
    <property type="project" value="UniProtKB-UniRule"/>
</dbReference>
<dbReference type="CDD" id="cd09209">
    <property type="entry name" value="Lumazine_synthase-I"/>
    <property type="match status" value="1"/>
</dbReference>
<dbReference type="Gene3D" id="3.40.50.960">
    <property type="entry name" value="Lumazine/riboflavin synthase"/>
    <property type="match status" value="1"/>
</dbReference>
<dbReference type="HAMAP" id="MF_00178">
    <property type="entry name" value="Lumazine_synth"/>
    <property type="match status" value="1"/>
</dbReference>
<dbReference type="InterPro" id="IPR034964">
    <property type="entry name" value="LS"/>
</dbReference>
<dbReference type="InterPro" id="IPR002180">
    <property type="entry name" value="LS/RS"/>
</dbReference>
<dbReference type="InterPro" id="IPR036467">
    <property type="entry name" value="LS/RS_sf"/>
</dbReference>
<dbReference type="NCBIfam" id="TIGR00114">
    <property type="entry name" value="lumazine-synth"/>
    <property type="match status" value="1"/>
</dbReference>
<dbReference type="NCBIfam" id="NF000814">
    <property type="entry name" value="PRK00061.2-2"/>
    <property type="match status" value="1"/>
</dbReference>
<dbReference type="PANTHER" id="PTHR21058:SF0">
    <property type="entry name" value="6,7-DIMETHYL-8-RIBITYLLUMAZINE SYNTHASE"/>
    <property type="match status" value="1"/>
</dbReference>
<dbReference type="PANTHER" id="PTHR21058">
    <property type="entry name" value="6,7-DIMETHYL-8-RIBITYLLUMAZINE SYNTHASE DMRL SYNTHASE LUMAZINE SYNTHASE"/>
    <property type="match status" value="1"/>
</dbReference>
<dbReference type="Pfam" id="PF00885">
    <property type="entry name" value="DMRL_synthase"/>
    <property type="match status" value="1"/>
</dbReference>
<dbReference type="SUPFAM" id="SSF52121">
    <property type="entry name" value="Lumazine synthase"/>
    <property type="match status" value="1"/>
</dbReference>
<gene>
    <name evidence="1" type="primary">ribH</name>
    <name type="ordered locus">BT_1314</name>
</gene>
<accession>A9IVC0</accession>
<proteinExistence type="inferred from homology"/>
<reference key="1">
    <citation type="journal article" date="2007" name="Nat. Genet.">
        <title>Genomic analysis of Bartonella identifies type IV secretion systems as host adaptability factors.</title>
        <authorList>
            <person name="Saenz H.L."/>
            <person name="Engel P."/>
            <person name="Stoeckli M.C."/>
            <person name="Lanz C."/>
            <person name="Raddatz G."/>
            <person name="Vayssier-Taussat M."/>
            <person name="Birtles R."/>
            <person name="Schuster S.C."/>
            <person name="Dehio C."/>
        </authorList>
    </citation>
    <scope>NUCLEOTIDE SEQUENCE [LARGE SCALE GENOMIC DNA]</scope>
    <source>
        <strain>CIP 105476 / IBS 506</strain>
    </source>
</reference>
<name>RISB_BART1</name>
<feature type="chain" id="PRO_1000077226" description="6,7-dimethyl-8-ribityllumazine synthase">
    <location>
        <begin position="1"/>
        <end position="151"/>
    </location>
</feature>
<feature type="active site" description="Proton donor" evidence="1">
    <location>
        <position position="82"/>
    </location>
</feature>
<feature type="binding site" evidence="1">
    <location>
        <position position="18"/>
    </location>
    <ligand>
        <name>5-amino-6-(D-ribitylamino)uracil</name>
        <dbReference type="ChEBI" id="CHEBI:15934"/>
    </ligand>
</feature>
<feature type="binding site" evidence="1">
    <location>
        <begin position="49"/>
        <end position="51"/>
    </location>
    <ligand>
        <name>5-amino-6-(D-ribitylamino)uracil</name>
        <dbReference type="ChEBI" id="CHEBI:15934"/>
    </ligand>
</feature>
<feature type="binding site" evidence="1">
    <location>
        <begin position="74"/>
        <end position="76"/>
    </location>
    <ligand>
        <name>5-amino-6-(D-ribitylamino)uracil</name>
        <dbReference type="ChEBI" id="CHEBI:15934"/>
    </ligand>
</feature>
<feature type="binding site" evidence="1">
    <location>
        <begin position="79"/>
        <end position="80"/>
    </location>
    <ligand>
        <name>(2S)-2-hydroxy-3-oxobutyl phosphate</name>
        <dbReference type="ChEBI" id="CHEBI:58830"/>
    </ligand>
</feature>
<feature type="binding site" evidence="1">
    <location>
        <position position="107"/>
    </location>
    <ligand>
        <name>5-amino-6-(D-ribitylamino)uracil</name>
        <dbReference type="ChEBI" id="CHEBI:15934"/>
    </ligand>
</feature>
<feature type="binding site" evidence="1">
    <location>
        <position position="121"/>
    </location>
    <ligand>
        <name>(2S)-2-hydroxy-3-oxobutyl phosphate</name>
        <dbReference type="ChEBI" id="CHEBI:58830"/>
    </ligand>
</feature>
<sequence>MMKEMRKKPHVLIVEARFYEKISDALLKGAVSALQKAEASYDTITVPGALEIPAAIAFAEQNKISYDGYVALGCVIRGETYHFEIVANDSCRALMDLTVHKRLAIGNGILTVENEEQAWERAKQDDKNKGGFAAEAALCMIALKKRFGDNR</sequence>
<evidence type="ECO:0000255" key="1">
    <source>
        <dbReference type="HAMAP-Rule" id="MF_00178"/>
    </source>
</evidence>
<keyword id="KW-0686">Riboflavin biosynthesis</keyword>
<keyword id="KW-0808">Transferase</keyword>
<comment type="function">
    <text evidence="1">Catalyzes the formation of 6,7-dimethyl-8-ribityllumazine by condensation of 5-amino-6-(D-ribitylamino)uracil with 3,4-dihydroxy-2-butanone 4-phosphate. This is the penultimate step in the biosynthesis of riboflavin.</text>
</comment>
<comment type="catalytic activity">
    <reaction evidence="1">
        <text>(2S)-2-hydroxy-3-oxobutyl phosphate + 5-amino-6-(D-ribitylamino)uracil = 6,7-dimethyl-8-(1-D-ribityl)lumazine + phosphate + 2 H2O + H(+)</text>
        <dbReference type="Rhea" id="RHEA:26152"/>
        <dbReference type="ChEBI" id="CHEBI:15377"/>
        <dbReference type="ChEBI" id="CHEBI:15378"/>
        <dbReference type="ChEBI" id="CHEBI:15934"/>
        <dbReference type="ChEBI" id="CHEBI:43474"/>
        <dbReference type="ChEBI" id="CHEBI:58201"/>
        <dbReference type="ChEBI" id="CHEBI:58830"/>
        <dbReference type="EC" id="2.5.1.78"/>
    </reaction>
</comment>
<comment type="pathway">
    <text evidence="1">Cofactor biosynthesis; riboflavin biosynthesis; riboflavin from 2-hydroxy-3-oxobutyl phosphate and 5-amino-6-(D-ribitylamino)uracil: step 1/2.</text>
</comment>
<comment type="similarity">
    <text evidence="1">Belongs to the DMRL synthase family.</text>
</comment>
<organism>
    <name type="scientific">Bartonella tribocorum (strain CIP 105476 / IBS 506)</name>
    <dbReference type="NCBI Taxonomy" id="382640"/>
    <lineage>
        <taxon>Bacteria</taxon>
        <taxon>Pseudomonadati</taxon>
        <taxon>Pseudomonadota</taxon>
        <taxon>Alphaproteobacteria</taxon>
        <taxon>Hyphomicrobiales</taxon>
        <taxon>Bartonellaceae</taxon>
        <taxon>Bartonella</taxon>
    </lineage>
</organism>